<feature type="chain" id="PRO_1000052715" description="Large ribosomal subunit protein uL5">
    <location>
        <begin position="1"/>
        <end position="181"/>
    </location>
</feature>
<gene>
    <name evidence="1" type="primary">rplE</name>
    <name type="ordered locus">CJJ81176_1692</name>
</gene>
<dbReference type="EMBL" id="CP000538">
    <property type="protein sequence ID" value="EAQ72621.1"/>
    <property type="molecule type" value="Genomic_DNA"/>
</dbReference>
<dbReference type="RefSeq" id="WP_002851453.1">
    <property type="nucleotide sequence ID" value="NC_008787.1"/>
</dbReference>
<dbReference type="SMR" id="A1W1U8"/>
<dbReference type="KEGG" id="cjj:CJJ81176_1692"/>
<dbReference type="eggNOG" id="COG0094">
    <property type="taxonomic scope" value="Bacteria"/>
</dbReference>
<dbReference type="HOGENOM" id="CLU_061015_2_1_7"/>
<dbReference type="Proteomes" id="UP000000646">
    <property type="component" value="Chromosome"/>
</dbReference>
<dbReference type="GO" id="GO:1990904">
    <property type="term" value="C:ribonucleoprotein complex"/>
    <property type="evidence" value="ECO:0007669"/>
    <property type="project" value="UniProtKB-KW"/>
</dbReference>
<dbReference type="GO" id="GO:0005840">
    <property type="term" value="C:ribosome"/>
    <property type="evidence" value="ECO:0007669"/>
    <property type="project" value="UniProtKB-KW"/>
</dbReference>
<dbReference type="GO" id="GO:0019843">
    <property type="term" value="F:rRNA binding"/>
    <property type="evidence" value="ECO:0007669"/>
    <property type="project" value="UniProtKB-UniRule"/>
</dbReference>
<dbReference type="GO" id="GO:0003735">
    <property type="term" value="F:structural constituent of ribosome"/>
    <property type="evidence" value="ECO:0007669"/>
    <property type="project" value="InterPro"/>
</dbReference>
<dbReference type="GO" id="GO:0000049">
    <property type="term" value="F:tRNA binding"/>
    <property type="evidence" value="ECO:0007669"/>
    <property type="project" value="UniProtKB-UniRule"/>
</dbReference>
<dbReference type="GO" id="GO:0006412">
    <property type="term" value="P:translation"/>
    <property type="evidence" value="ECO:0007669"/>
    <property type="project" value="UniProtKB-UniRule"/>
</dbReference>
<dbReference type="FunFam" id="3.30.1440.10:FF:000001">
    <property type="entry name" value="50S ribosomal protein L5"/>
    <property type="match status" value="1"/>
</dbReference>
<dbReference type="Gene3D" id="3.30.1440.10">
    <property type="match status" value="1"/>
</dbReference>
<dbReference type="HAMAP" id="MF_01333_B">
    <property type="entry name" value="Ribosomal_uL5_B"/>
    <property type="match status" value="1"/>
</dbReference>
<dbReference type="InterPro" id="IPR002132">
    <property type="entry name" value="Ribosomal_uL5"/>
</dbReference>
<dbReference type="InterPro" id="IPR020930">
    <property type="entry name" value="Ribosomal_uL5_bac-type"/>
</dbReference>
<dbReference type="InterPro" id="IPR031309">
    <property type="entry name" value="Ribosomal_uL5_C"/>
</dbReference>
<dbReference type="InterPro" id="IPR020929">
    <property type="entry name" value="Ribosomal_uL5_CS"/>
</dbReference>
<dbReference type="InterPro" id="IPR022803">
    <property type="entry name" value="Ribosomal_uL5_dom_sf"/>
</dbReference>
<dbReference type="InterPro" id="IPR031310">
    <property type="entry name" value="Ribosomal_uL5_N"/>
</dbReference>
<dbReference type="NCBIfam" id="NF000585">
    <property type="entry name" value="PRK00010.1"/>
    <property type="match status" value="1"/>
</dbReference>
<dbReference type="PANTHER" id="PTHR11994">
    <property type="entry name" value="60S RIBOSOMAL PROTEIN L11-RELATED"/>
    <property type="match status" value="1"/>
</dbReference>
<dbReference type="Pfam" id="PF00281">
    <property type="entry name" value="Ribosomal_L5"/>
    <property type="match status" value="1"/>
</dbReference>
<dbReference type="Pfam" id="PF00673">
    <property type="entry name" value="Ribosomal_L5_C"/>
    <property type="match status" value="1"/>
</dbReference>
<dbReference type="PIRSF" id="PIRSF002161">
    <property type="entry name" value="Ribosomal_L5"/>
    <property type="match status" value="1"/>
</dbReference>
<dbReference type="SUPFAM" id="SSF55282">
    <property type="entry name" value="RL5-like"/>
    <property type="match status" value="1"/>
</dbReference>
<dbReference type="PROSITE" id="PS00358">
    <property type="entry name" value="RIBOSOMAL_L5"/>
    <property type="match status" value="1"/>
</dbReference>
<comment type="function">
    <text evidence="1">This is one of the proteins that bind and probably mediate the attachment of the 5S RNA into the large ribosomal subunit, where it forms part of the central protuberance. In the 70S ribosome it contacts protein S13 of the 30S subunit (bridge B1b), connecting the 2 subunits; this bridge is implicated in subunit movement. Contacts the P site tRNA; the 5S rRNA and some of its associated proteins might help stabilize positioning of ribosome-bound tRNAs.</text>
</comment>
<comment type="subunit">
    <text evidence="1">Part of the 50S ribosomal subunit; part of the 5S rRNA/L5/L18/L25 subcomplex. Contacts the 5S rRNA and the P site tRNA. Forms a bridge to the 30S subunit in the 70S ribosome.</text>
</comment>
<comment type="similarity">
    <text evidence="1">Belongs to the universal ribosomal protein uL5 family.</text>
</comment>
<name>RL5_CAMJJ</name>
<sequence>MMRLKEKYNQSIKPALVKEFDIKNPMLIPVIEKVVISVGAGELAKDQKVLQNVADTISLIAGQKAVITKAKKSVAGFKVREGFPVGVMVTLRKENMYAFLDKLISIALPRVKDFRGLSRDGFDGRGNYNFGLDEQLMFPEVEYDKILRTHGMNISIVTTAQNDKQAQKLLELIGVPFTKGK</sequence>
<reference key="1">
    <citation type="submission" date="2006-12" db="EMBL/GenBank/DDBJ databases">
        <authorList>
            <person name="Fouts D.E."/>
            <person name="Nelson K.E."/>
            <person name="Sebastian Y."/>
        </authorList>
    </citation>
    <scope>NUCLEOTIDE SEQUENCE [LARGE SCALE GENOMIC DNA]</scope>
    <source>
        <strain>81-176</strain>
    </source>
</reference>
<evidence type="ECO:0000255" key="1">
    <source>
        <dbReference type="HAMAP-Rule" id="MF_01333"/>
    </source>
</evidence>
<evidence type="ECO:0000305" key="2"/>
<organism>
    <name type="scientific">Campylobacter jejuni subsp. jejuni serotype O:23/36 (strain 81-176)</name>
    <dbReference type="NCBI Taxonomy" id="354242"/>
    <lineage>
        <taxon>Bacteria</taxon>
        <taxon>Pseudomonadati</taxon>
        <taxon>Campylobacterota</taxon>
        <taxon>Epsilonproteobacteria</taxon>
        <taxon>Campylobacterales</taxon>
        <taxon>Campylobacteraceae</taxon>
        <taxon>Campylobacter</taxon>
    </lineage>
</organism>
<protein>
    <recommendedName>
        <fullName evidence="1">Large ribosomal subunit protein uL5</fullName>
    </recommendedName>
    <alternativeName>
        <fullName evidence="2">50S ribosomal protein L5</fullName>
    </alternativeName>
</protein>
<keyword id="KW-0687">Ribonucleoprotein</keyword>
<keyword id="KW-0689">Ribosomal protein</keyword>
<keyword id="KW-0694">RNA-binding</keyword>
<keyword id="KW-0699">rRNA-binding</keyword>
<keyword id="KW-0820">tRNA-binding</keyword>
<accession>A1W1U8</accession>
<proteinExistence type="inferred from homology"/>